<feature type="chain" id="PRO_0000237578" description="Glutamine-dependent NAD(+) synthetase">
    <location>
        <begin position="1"/>
        <end position="706"/>
    </location>
</feature>
<feature type="domain" description="CN hydrolase" evidence="4">
    <location>
        <begin position="5"/>
        <end position="275"/>
    </location>
</feature>
<feature type="region of interest" description="Ligase" evidence="1">
    <location>
        <begin position="325"/>
        <end position="706"/>
    </location>
</feature>
<feature type="active site" description="Proton acceptor; for glutaminase activity" evidence="2">
    <location>
        <position position="45"/>
    </location>
</feature>
<feature type="active site" description="For glutaminase activity" evidence="2">
    <location>
        <position position="114"/>
    </location>
</feature>
<feature type="active site" description="Nucleophile; for glutaminase activity" evidence="2">
    <location>
        <position position="175"/>
    </location>
</feature>
<feature type="active site" evidence="1">
    <location>
        <position position="357"/>
    </location>
</feature>
<feature type="binding site" evidence="1">
    <location>
        <begin position="355"/>
        <end position="362"/>
    </location>
    <ligand>
        <name>ATP</name>
        <dbReference type="ChEBI" id="CHEBI:30616"/>
    </ligand>
</feature>
<organism>
    <name type="scientific">Macaca fascicularis</name>
    <name type="common">Crab-eating macaque</name>
    <name type="synonym">Cynomolgus monkey</name>
    <dbReference type="NCBI Taxonomy" id="9541"/>
    <lineage>
        <taxon>Eukaryota</taxon>
        <taxon>Metazoa</taxon>
        <taxon>Chordata</taxon>
        <taxon>Craniata</taxon>
        <taxon>Vertebrata</taxon>
        <taxon>Euteleostomi</taxon>
        <taxon>Mammalia</taxon>
        <taxon>Eutheria</taxon>
        <taxon>Euarchontoglires</taxon>
        <taxon>Primates</taxon>
        <taxon>Haplorrhini</taxon>
        <taxon>Catarrhini</taxon>
        <taxon>Cercopithecidae</taxon>
        <taxon>Cercopithecinae</taxon>
        <taxon>Macaca</taxon>
    </lineage>
</organism>
<protein>
    <recommendedName>
        <fullName>Glutamine-dependent NAD(+) synthetase</fullName>
        <ecNumber evidence="3">6.3.5.1</ecNumber>
    </recommendedName>
    <alternativeName>
        <fullName>NAD(+) synthase [glutamine-hydrolyzing]</fullName>
    </alternativeName>
    <alternativeName>
        <fullName>NAD(+) synthetase</fullName>
    </alternativeName>
</protein>
<accession>Q4R5Y2</accession>
<name>NADE_MACFA</name>
<keyword id="KW-0067">ATP-binding</keyword>
<keyword id="KW-0436">Ligase</keyword>
<keyword id="KW-0520">NAD</keyword>
<keyword id="KW-0547">Nucleotide-binding</keyword>
<keyword id="KW-1185">Reference proteome</keyword>
<proteinExistence type="evidence at transcript level"/>
<gene>
    <name type="primary">NADSYN1</name>
    <name type="ORF">QtsA-19858</name>
</gene>
<sequence length="706" mass="79071">MGRKVTVATCALNQWALDFEGNLQRILKSIEIAKNRGARYRLGPELEICGYGCWDHYYESDTLLHSFQVLAALLESPVTQDIICDVGMPVMHRNVRYNCRVIFLSRKILLIRPKMALANEGNYRELRWFTPWSRSRHTEEYLLPRMIQDLTKQETAPFGDAVLATWDTCIGSEICEELWTPHSPHIDMGLDGVEIITNASGSHHVLRKANTRVDLVTMATSKNGGIYLLANQKGCDGDRLYYDGCAMIAMNGSVFAQGSQFSLDDVEVLTATLDLEDVRSYRAEISSRNLAASRASPYPRVKVDFALSCHEDLLAPVSEPIEWKYHSPEEEISLGPACWLWDFLRRSQQGGFLLPLSGGVDSAATACLVYSMCCQVCKSVRSGNQEVLADVRTIVNQISYTPQDPRDLCGHILTTCYMASKNSSQETCTRARELAQQIGSHHISLNIDPAVKAVTGIFSLVTGKSPLFAAHGGSSRENLALQNVQARIRMVLAYLFAQLSLWSRGIRGGLLVLGSANVDESLLGYLTKYDCSSADINPIGGISKTDLRAFVQFCIERFQLTALQSIISAPVTAELEPLADGQVSQTDEEDMGMTYAELSVYGKLRKVAKMGPYSMFCKLLGMWRHVCTPRQVADKVKWFFTKHSMNRHKMTTLTPAYHAENYSPEDNRFDLRPFLYNTSWPWQFRCIENQVLQLERAAPQSLDGVD</sequence>
<comment type="function">
    <text evidence="3">Catalyzes the final step of the nicotinamide adenine dinucleotide (NAD) de novo synthesis pathway, the ATP-dependent amidation of deamido-NAD using L-glutamine as a nitrogen source.</text>
</comment>
<comment type="catalytic activity">
    <reaction evidence="3">
        <text>deamido-NAD(+) + L-glutamine + ATP + H2O = L-glutamate + AMP + diphosphate + NAD(+) + H(+)</text>
        <dbReference type="Rhea" id="RHEA:24384"/>
        <dbReference type="ChEBI" id="CHEBI:15377"/>
        <dbReference type="ChEBI" id="CHEBI:15378"/>
        <dbReference type="ChEBI" id="CHEBI:29985"/>
        <dbReference type="ChEBI" id="CHEBI:30616"/>
        <dbReference type="ChEBI" id="CHEBI:33019"/>
        <dbReference type="ChEBI" id="CHEBI:57540"/>
        <dbReference type="ChEBI" id="CHEBI:58359"/>
        <dbReference type="ChEBI" id="CHEBI:58437"/>
        <dbReference type="ChEBI" id="CHEBI:456215"/>
        <dbReference type="EC" id="6.3.5.1"/>
    </reaction>
    <physiologicalReaction direction="left-to-right" evidence="3">
        <dbReference type="Rhea" id="RHEA:24385"/>
    </physiologicalReaction>
</comment>
<comment type="pathway">
    <text evidence="3">Cofactor biosynthesis; NAD(+) biosynthesis; NAD(+) from deamido-NAD(+) (L-Gln route): step 1/1.</text>
</comment>
<comment type="subunit">
    <text evidence="3">Homohexamer.</text>
</comment>
<comment type="similarity">
    <text evidence="5">In the C-terminal section; belongs to the NAD synthetase family.</text>
</comment>
<evidence type="ECO:0000250" key="1"/>
<evidence type="ECO:0000250" key="2">
    <source>
        <dbReference type="UniProtKB" id="P9WJJ3"/>
    </source>
</evidence>
<evidence type="ECO:0000250" key="3">
    <source>
        <dbReference type="UniProtKB" id="Q6IA69"/>
    </source>
</evidence>
<evidence type="ECO:0000255" key="4">
    <source>
        <dbReference type="PROSITE-ProRule" id="PRU00054"/>
    </source>
</evidence>
<evidence type="ECO:0000305" key="5"/>
<reference key="1">
    <citation type="submission" date="2005-06" db="EMBL/GenBank/DDBJ databases">
        <title>DNA sequences of macaque genes expressed in brain or testis and its evolutionary implications.</title>
        <authorList>
            <consortium name="International consortium for macaque cDNA sequencing and analysis"/>
        </authorList>
    </citation>
    <scope>NUCLEOTIDE SEQUENCE [LARGE SCALE MRNA]</scope>
    <source>
        <tissue>Testis</tissue>
    </source>
</reference>
<dbReference type="EC" id="6.3.5.1" evidence="3"/>
<dbReference type="EMBL" id="AB169410">
    <property type="protein sequence ID" value="BAE01493.1"/>
    <property type="molecule type" value="mRNA"/>
</dbReference>
<dbReference type="RefSeq" id="NP_001270170.1">
    <property type="nucleotide sequence ID" value="NM_001283241.1"/>
</dbReference>
<dbReference type="SMR" id="Q4R5Y2"/>
<dbReference type="STRING" id="9541.ENSMFAP00000042654"/>
<dbReference type="eggNOG" id="KOG2303">
    <property type="taxonomic scope" value="Eukaryota"/>
</dbReference>
<dbReference type="UniPathway" id="UPA00253">
    <property type="reaction ID" value="UER00334"/>
</dbReference>
<dbReference type="Proteomes" id="UP000233100">
    <property type="component" value="Unplaced"/>
</dbReference>
<dbReference type="GO" id="GO:0005737">
    <property type="term" value="C:cytoplasm"/>
    <property type="evidence" value="ECO:0007669"/>
    <property type="project" value="InterPro"/>
</dbReference>
<dbReference type="GO" id="GO:0005524">
    <property type="term" value="F:ATP binding"/>
    <property type="evidence" value="ECO:0007669"/>
    <property type="project" value="UniProtKB-KW"/>
</dbReference>
<dbReference type="GO" id="GO:0004359">
    <property type="term" value="F:glutaminase activity"/>
    <property type="evidence" value="ECO:0007669"/>
    <property type="project" value="InterPro"/>
</dbReference>
<dbReference type="GO" id="GO:0003952">
    <property type="term" value="F:NAD+ synthase (glutamine-hydrolyzing) activity"/>
    <property type="evidence" value="ECO:0000250"/>
    <property type="project" value="UniProtKB"/>
</dbReference>
<dbReference type="GO" id="GO:0034354">
    <property type="term" value="P:'de novo' NAD biosynthetic process from L-tryptophan"/>
    <property type="evidence" value="ECO:0000250"/>
    <property type="project" value="UniProtKB"/>
</dbReference>
<dbReference type="CDD" id="cd07570">
    <property type="entry name" value="GAT_Gln-NAD-synth"/>
    <property type="match status" value="1"/>
</dbReference>
<dbReference type="CDD" id="cd00553">
    <property type="entry name" value="NAD_synthase"/>
    <property type="match status" value="1"/>
</dbReference>
<dbReference type="FunFam" id="3.40.50.620:FF:000036">
    <property type="entry name" value="Glutamine-dependent NAD(+) synthetase"/>
    <property type="match status" value="1"/>
</dbReference>
<dbReference type="FunFam" id="3.60.110.10:FF:000007">
    <property type="entry name" value="Glutamine-dependent NAD(+) synthetase"/>
    <property type="match status" value="1"/>
</dbReference>
<dbReference type="Gene3D" id="3.60.110.10">
    <property type="entry name" value="Carbon-nitrogen hydrolase"/>
    <property type="match status" value="1"/>
</dbReference>
<dbReference type="Gene3D" id="3.40.50.620">
    <property type="entry name" value="HUPs"/>
    <property type="match status" value="1"/>
</dbReference>
<dbReference type="HAMAP" id="MF_02090">
    <property type="entry name" value="NadE_glutamine_dep"/>
    <property type="match status" value="1"/>
</dbReference>
<dbReference type="InterPro" id="IPR003010">
    <property type="entry name" value="C-N_Hydrolase"/>
</dbReference>
<dbReference type="InterPro" id="IPR036526">
    <property type="entry name" value="C-N_Hydrolase_sf"/>
</dbReference>
<dbReference type="InterPro" id="IPR014445">
    <property type="entry name" value="Gln-dep_NAD_synthase"/>
</dbReference>
<dbReference type="InterPro" id="IPR022310">
    <property type="entry name" value="NAD/GMP_synthase"/>
</dbReference>
<dbReference type="InterPro" id="IPR003694">
    <property type="entry name" value="NAD_synthase"/>
</dbReference>
<dbReference type="InterPro" id="IPR014729">
    <property type="entry name" value="Rossmann-like_a/b/a_fold"/>
</dbReference>
<dbReference type="NCBIfam" id="TIGR00552">
    <property type="entry name" value="nadE"/>
    <property type="match status" value="1"/>
</dbReference>
<dbReference type="PANTHER" id="PTHR23090:SF9">
    <property type="entry name" value="GLUTAMINE-DEPENDENT NAD(+) SYNTHETASE"/>
    <property type="match status" value="1"/>
</dbReference>
<dbReference type="PANTHER" id="PTHR23090">
    <property type="entry name" value="NH 3 /GLUTAMINE-DEPENDENT NAD + SYNTHETASE"/>
    <property type="match status" value="1"/>
</dbReference>
<dbReference type="Pfam" id="PF00795">
    <property type="entry name" value="CN_hydrolase"/>
    <property type="match status" value="1"/>
</dbReference>
<dbReference type="Pfam" id="PF02540">
    <property type="entry name" value="NAD_synthase"/>
    <property type="match status" value="1"/>
</dbReference>
<dbReference type="PIRSF" id="PIRSF006630">
    <property type="entry name" value="NADS_GAT"/>
    <property type="match status" value="1"/>
</dbReference>
<dbReference type="SUPFAM" id="SSF52402">
    <property type="entry name" value="Adenine nucleotide alpha hydrolases-like"/>
    <property type="match status" value="1"/>
</dbReference>
<dbReference type="SUPFAM" id="SSF56317">
    <property type="entry name" value="Carbon-nitrogen hydrolase"/>
    <property type="match status" value="1"/>
</dbReference>
<dbReference type="PROSITE" id="PS50263">
    <property type="entry name" value="CN_HYDROLASE"/>
    <property type="match status" value="1"/>
</dbReference>